<reference key="1">
    <citation type="journal article" date="1998" name="Science">
        <title>Genome sequence of the nematode C. elegans: a platform for investigating biology.</title>
        <authorList>
            <consortium name="The C. elegans sequencing consortium"/>
        </authorList>
    </citation>
    <scope>NUCLEOTIDE SEQUENCE [LARGE SCALE GENOMIC DNA]</scope>
    <source>
        <strain>Bristol N2</strain>
    </source>
</reference>
<reference key="2">
    <citation type="journal article" date="1997" name="Electrophoresis">
        <title>Two-dimensional gel electrophoresis of Caenorhabditis elegans homogenates and identification of protein spots by microsequencing.</title>
        <authorList>
            <person name="Bini L."/>
            <person name="Heid H."/>
            <person name="Liberatori S."/>
            <person name="Geier G."/>
            <person name="Pallini V."/>
            <person name="Zwilling R."/>
        </authorList>
    </citation>
    <scope>PROTEIN SEQUENCE OF 2-11 (ISOFORM A)</scope>
    <source>
        <strain>Bristol N2</strain>
    </source>
</reference>
<name>ENO_CAEEL</name>
<accession>Q27527</accession>
<accession>Q6A4N1</accession>
<accession>Q8I4F9</accession>
<proteinExistence type="evidence at protein level"/>
<dbReference type="EC" id="4.2.1.11" evidence="2"/>
<dbReference type="EMBL" id="BX284602">
    <property type="protein sequence ID" value="CAA92692.1"/>
    <property type="molecule type" value="Genomic_DNA"/>
</dbReference>
<dbReference type="EMBL" id="BX284602">
    <property type="protein sequence ID" value="CAH10783.1"/>
    <property type="molecule type" value="Genomic_DNA"/>
</dbReference>
<dbReference type="PIR" id="T25040">
    <property type="entry name" value="T25040"/>
</dbReference>
<dbReference type="RefSeq" id="NP_001022349.1">
    <molecule id="Q27527-3"/>
    <property type="nucleotide sequence ID" value="NM_001027178.4"/>
</dbReference>
<dbReference type="RefSeq" id="NP_495900.1">
    <molecule id="Q27527-1"/>
    <property type="nucleotide sequence ID" value="NM_063499.8"/>
</dbReference>
<dbReference type="SMR" id="Q27527"/>
<dbReference type="BioGRID" id="39750">
    <property type="interactions" value="61"/>
</dbReference>
<dbReference type="FunCoup" id="Q27527">
    <property type="interactions" value="1008"/>
</dbReference>
<dbReference type="IntAct" id="Q27527">
    <property type="interactions" value="1"/>
</dbReference>
<dbReference type="STRING" id="6239.T21B10.2c.2"/>
<dbReference type="PaxDb" id="6239-T21B10.2c.1"/>
<dbReference type="PeptideAtlas" id="Q27527"/>
<dbReference type="EnsemblMetazoa" id="T21B10.2a.1">
    <molecule id="Q27527-1"/>
    <property type="protein sequence ID" value="T21B10.2a.1"/>
    <property type="gene ID" value="WBGene00011884"/>
</dbReference>
<dbReference type="EnsemblMetazoa" id="T21B10.2a.2">
    <molecule id="Q27527-1"/>
    <property type="protein sequence ID" value="T21B10.2a.2"/>
    <property type="gene ID" value="WBGene00011884"/>
</dbReference>
<dbReference type="EnsemblMetazoa" id="T21B10.2c.1">
    <molecule id="Q27527-3"/>
    <property type="protein sequence ID" value="T21B10.2c.1"/>
    <property type="gene ID" value="WBGene00011884"/>
</dbReference>
<dbReference type="GeneID" id="174423"/>
<dbReference type="KEGG" id="cel:CELE_T21B10.2"/>
<dbReference type="UCSC" id="T21B10.2c.1">
    <molecule id="Q27527-1"/>
    <property type="organism name" value="c. elegans"/>
</dbReference>
<dbReference type="AGR" id="WB:WBGene00011884"/>
<dbReference type="CTD" id="174423"/>
<dbReference type="WormBase" id="T21B10.2a">
    <molecule id="Q27527-1"/>
    <property type="protein sequence ID" value="CE03684"/>
    <property type="gene ID" value="WBGene00011884"/>
    <property type="gene designation" value="enol-1"/>
</dbReference>
<dbReference type="WormBase" id="T21B10.2c">
    <molecule id="Q27527-3"/>
    <property type="protein sequence ID" value="CE36954"/>
    <property type="gene ID" value="WBGene00011884"/>
    <property type="gene designation" value="enol-1"/>
</dbReference>
<dbReference type="eggNOG" id="KOG2670">
    <property type="taxonomic scope" value="Eukaryota"/>
</dbReference>
<dbReference type="GeneTree" id="ENSGT00950000182805"/>
<dbReference type="HOGENOM" id="CLU_031223_0_0_1"/>
<dbReference type="InParanoid" id="Q27527"/>
<dbReference type="OMA" id="RCMMSHR"/>
<dbReference type="OrthoDB" id="1739814at2759"/>
<dbReference type="PhylomeDB" id="Q27527"/>
<dbReference type="Reactome" id="R-CEL-70171">
    <property type="pathway name" value="Glycolysis"/>
</dbReference>
<dbReference type="Reactome" id="R-CEL-70263">
    <property type="pathway name" value="Gluconeogenesis"/>
</dbReference>
<dbReference type="UniPathway" id="UPA00109">
    <property type="reaction ID" value="UER00187"/>
</dbReference>
<dbReference type="PRO" id="PR:Q27527"/>
<dbReference type="Proteomes" id="UP000001940">
    <property type="component" value="Chromosome II"/>
</dbReference>
<dbReference type="Bgee" id="WBGene00011884">
    <property type="expression patterns" value="Expressed in adult organism and 4 other cell types or tissues"/>
</dbReference>
<dbReference type="GO" id="GO:0005737">
    <property type="term" value="C:cytoplasm"/>
    <property type="evidence" value="ECO:0000250"/>
    <property type="project" value="WormBase"/>
</dbReference>
<dbReference type="GO" id="GO:0000015">
    <property type="term" value="C:phosphopyruvate hydratase complex"/>
    <property type="evidence" value="ECO:0000318"/>
    <property type="project" value="GO_Central"/>
</dbReference>
<dbReference type="GO" id="GO:0000287">
    <property type="term" value="F:magnesium ion binding"/>
    <property type="evidence" value="ECO:0007669"/>
    <property type="project" value="InterPro"/>
</dbReference>
<dbReference type="GO" id="GO:0004634">
    <property type="term" value="F:phosphopyruvate hydratase activity"/>
    <property type="evidence" value="ECO:0000318"/>
    <property type="project" value="GO_Central"/>
</dbReference>
<dbReference type="GO" id="GO:0006096">
    <property type="term" value="P:glycolytic process"/>
    <property type="evidence" value="ECO:0000318"/>
    <property type="project" value="GO_Central"/>
</dbReference>
<dbReference type="CDD" id="cd03313">
    <property type="entry name" value="enolase"/>
    <property type="match status" value="1"/>
</dbReference>
<dbReference type="FunFam" id="3.30.390.10:FF:000001">
    <property type="entry name" value="Enolase"/>
    <property type="match status" value="1"/>
</dbReference>
<dbReference type="FunFam" id="3.20.20.120:FF:000002">
    <property type="entry name" value="Enolase 1"/>
    <property type="match status" value="1"/>
</dbReference>
<dbReference type="Gene3D" id="3.20.20.120">
    <property type="entry name" value="Enolase-like C-terminal domain"/>
    <property type="match status" value="1"/>
</dbReference>
<dbReference type="Gene3D" id="3.30.390.10">
    <property type="entry name" value="Enolase-like, N-terminal domain"/>
    <property type="match status" value="1"/>
</dbReference>
<dbReference type="HAMAP" id="MF_00318">
    <property type="entry name" value="Enolase"/>
    <property type="match status" value="1"/>
</dbReference>
<dbReference type="InterPro" id="IPR000941">
    <property type="entry name" value="Enolase"/>
</dbReference>
<dbReference type="InterPro" id="IPR036849">
    <property type="entry name" value="Enolase-like_C_sf"/>
</dbReference>
<dbReference type="InterPro" id="IPR029017">
    <property type="entry name" value="Enolase-like_N"/>
</dbReference>
<dbReference type="InterPro" id="IPR020810">
    <property type="entry name" value="Enolase_C"/>
</dbReference>
<dbReference type="InterPro" id="IPR020809">
    <property type="entry name" value="Enolase_CS"/>
</dbReference>
<dbReference type="InterPro" id="IPR020811">
    <property type="entry name" value="Enolase_N"/>
</dbReference>
<dbReference type="NCBIfam" id="TIGR01060">
    <property type="entry name" value="eno"/>
    <property type="match status" value="1"/>
</dbReference>
<dbReference type="PANTHER" id="PTHR11902">
    <property type="entry name" value="ENOLASE"/>
    <property type="match status" value="1"/>
</dbReference>
<dbReference type="PANTHER" id="PTHR11902:SF1">
    <property type="entry name" value="ENOLASE"/>
    <property type="match status" value="1"/>
</dbReference>
<dbReference type="Pfam" id="PF00113">
    <property type="entry name" value="Enolase_C"/>
    <property type="match status" value="1"/>
</dbReference>
<dbReference type="Pfam" id="PF03952">
    <property type="entry name" value="Enolase_N"/>
    <property type="match status" value="1"/>
</dbReference>
<dbReference type="PIRSF" id="PIRSF001400">
    <property type="entry name" value="Enolase"/>
    <property type="match status" value="1"/>
</dbReference>
<dbReference type="PRINTS" id="PR00148">
    <property type="entry name" value="ENOLASE"/>
</dbReference>
<dbReference type="SFLD" id="SFLDS00001">
    <property type="entry name" value="Enolase"/>
    <property type="match status" value="1"/>
</dbReference>
<dbReference type="SFLD" id="SFLDF00002">
    <property type="entry name" value="enolase"/>
    <property type="match status" value="1"/>
</dbReference>
<dbReference type="SMART" id="SM01192">
    <property type="entry name" value="Enolase_C"/>
    <property type="match status" value="1"/>
</dbReference>
<dbReference type="SMART" id="SM01193">
    <property type="entry name" value="Enolase_N"/>
    <property type="match status" value="1"/>
</dbReference>
<dbReference type="SUPFAM" id="SSF51604">
    <property type="entry name" value="Enolase C-terminal domain-like"/>
    <property type="match status" value="1"/>
</dbReference>
<dbReference type="SUPFAM" id="SSF54826">
    <property type="entry name" value="Enolase N-terminal domain-like"/>
    <property type="match status" value="1"/>
</dbReference>
<dbReference type="PROSITE" id="PS00164">
    <property type="entry name" value="ENOLASE"/>
    <property type="match status" value="1"/>
</dbReference>
<sequence length="434" mass="46617">MPITKIHARQIYDSRGNPTVEVDLFTEKGVFRAAVPSGASTGVHEALELRDGDKAVHLGKGVLKAVSNINEKIAPALIAKGFDVTAQKDIDDFMMALDGSENKGNLGANAILGVSLAVAKAGAVHKGLPLYKYIAELAGTGKVVLPVPAFNVINGGSHAGNKLAMQEFMILPVGASSFAEAMRMGSEVYHHLKAEIKKRYGLDATAVGDEGGFAPNIQDNKEGLDLLNTAIDKAGYTGKISIGMDVAASEFFKDGKYDLDFKNPASDSSKWLSGEQLTELYQSFIKEYPVVSIEDAFDQDDWDNWGKFHGATSIQLVGDDLTVTNPKRIQTAIDKKSCNCLLLKVNQIGSVTESIEAAKLSRANGWGVMVSHRSGETEDTFIADLVVGLATGQIKTGAPCRSERLAKYNQLLRIEEELGADAVYAGHNFRNPQV</sequence>
<gene>
    <name evidence="5" type="primary">enol-1</name>
    <name evidence="5" type="ORF">T21B10.2</name>
</gene>
<evidence type="ECO:0000250" key="1">
    <source>
        <dbReference type="UniProtKB" id="P00924"/>
    </source>
</evidence>
<evidence type="ECO:0000250" key="2">
    <source>
        <dbReference type="UniProtKB" id="P06733"/>
    </source>
</evidence>
<evidence type="ECO:0000269" key="3">
    <source>
    </source>
</evidence>
<evidence type="ECO:0000305" key="4"/>
<evidence type="ECO:0000312" key="5">
    <source>
        <dbReference type="WormBase" id="T21B10.2a"/>
    </source>
</evidence>
<evidence type="ECO:0000312" key="6">
    <source>
        <dbReference type="WormBase" id="T21B10.2c"/>
    </source>
</evidence>
<feature type="initiator methionine" description="Removed" evidence="3">
    <location>
        <position position="1"/>
    </location>
</feature>
<feature type="chain" id="PRO_0000134079" description="Enolase">
    <location>
        <begin position="2"/>
        <end position="434"/>
    </location>
</feature>
<feature type="active site" description="Proton donor" evidence="1">
    <location>
        <position position="210"/>
    </location>
</feature>
<feature type="active site" description="Proton acceptor" evidence="4">
    <location>
        <position position="344"/>
    </location>
</feature>
<feature type="binding site" evidence="1">
    <location>
        <position position="158"/>
    </location>
    <ligand>
        <name>substrate</name>
    </ligand>
</feature>
<feature type="binding site" evidence="1">
    <location>
        <position position="167"/>
    </location>
    <ligand>
        <name>substrate</name>
    </ligand>
</feature>
<feature type="binding site" evidence="1">
    <location>
        <position position="245"/>
    </location>
    <ligand>
        <name>Mg(2+)</name>
        <dbReference type="ChEBI" id="CHEBI:18420"/>
    </ligand>
</feature>
<feature type="binding site" evidence="1">
    <location>
        <position position="294"/>
    </location>
    <ligand>
        <name>Mg(2+)</name>
        <dbReference type="ChEBI" id="CHEBI:18420"/>
    </ligand>
</feature>
<feature type="binding site" evidence="1">
    <location>
        <position position="294"/>
    </location>
    <ligand>
        <name>substrate</name>
    </ligand>
</feature>
<feature type="binding site" evidence="1">
    <location>
        <position position="319"/>
    </location>
    <ligand>
        <name>Mg(2+)</name>
        <dbReference type="ChEBI" id="CHEBI:18420"/>
    </ligand>
</feature>
<feature type="binding site" evidence="1">
    <location>
        <position position="319"/>
    </location>
    <ligand>
        <name>substrate</name>
    </ligand>
</feature>
<feature type="binding site" evidence="1">
    <location>
        <begin position="371"/>
        <end position="374"/>
    </location>
    <ligand>
        <name>substrate</name>
    </ligand>
</feature>
<feature type="binding site" evidence="1">
    <location>
        <position position="395"/>
    </location>
    <ligand>
        <name>substrate</name>
    </ligand>
</feature>
<feature type="splice variant" id="VSP_020148" description="In isoform c." evidence="4">
    <original>MP</original>
    <variation>MFVPFTSAAHSLTSLIRGGGQPSKSNLSGQRMP</variation>
    <location>
        <begin position="1"/>
        <end position="2"/>
    </location>
</feature>
<protein>
    <recommendedName>
        <fullName>Enolase</fullName>
        <ecNumber evidence="2">4.2.1.11</ecNumber>
    </recommendedName>
    <alternativeName>
        <fullName>2-phospho-D-glycerate hydro-lyase</fullName>
    </alternativeName>
    <alternativeName>
        <fullName>2-phosphoglycerate dehydratase</fullName>
    </alternativeName>
</protein>
<keyword id="KW-0025">Alternative splicing</keyword>
<keyword id="KW-0963">Cytoplasm</keyword>
<keyword id="KW-0903">Direct protein sequencing</keyword>
<keyword id="KW-0324">Glycolysis</keyword>
<keyword id="KW-0456">Lyase</keyword>
<keyword id="KW-0460">Magnesium</keyword>
<keyword id="KW-0479">Metal-binding</keyword>
<keyword id="KW-1185">Reference proteome</keyword>
<comment type="catalytic activity">
    <reaction evidence="2">
        <text>(2R)-2-phosphoglycerate = phosphoenolpyruvate + H2O</text>
        <dbReference type="Rhea" id="RHEA:10164"/>
        <dbReference type="ChEBI" id="CHEBI:15377"/>
        <dbReference type="ChEBI" id="CHEBI:58289"/>
        <dbReference type="ChEBI" id="CHEBI:58702"/>
        <dbReference type="EC" id="4.2.1.11"/>
    </reaction>
</comment>
<comment type="cofactor">
    <cofactor evidence="1">
        <name>Mg(2+)</name>
        <dbReference type="ChEBI" id="CHEBI:18420"/>
    </cofactor>
    <text evidence="1">Mg(2+) is required for catalysis and for stabilizing the dimer.</text>
</comment>
<comment type="pathway">
    <text evidence="2">Carbohydrate degradation; glycolysis; pyruvate from D-glyceraldehyde 3-phosphate: step 4/5.</text>
</comment>
<comment type="subunit">
    <text evidence="1">Homodimer.</text>
</comment>
<comment type="subcellular location">
    <subcellularLocation>
        <location evidence="1">Cytoplasm</location>
    </subcellularLocation>
</comment>
<comment type="alternative products">
    <event type="alternative splicing"/>
    <isoform>
        <id>Q27527-1</id>
        <name evidence="5">a</name>
        <sequence type="displayed"/>
    </isoform>
    <isoform>
        <id>Q27527-3</id>
        <name evidence="6">c</name>
        <sequence type="described" ref="VSP_020148"/>
    </isoform>
</comment>
<comment type="similarity">
    <text evidence="4">Belongs to the enolase family.</text>
</comment>
<organism>
    <name type="scientific">Caenorhabditis elegans</name>
    <dbReference type="NCBI Taxonomy" id="6239"/>
    <lineage>
        <taxon>Eukaryota</taxon>
        <taxon>Metazoa</taxon>
        <taxon>Ecdysozoa</taxon>
        <taxon>Nematoda</taxon>
        <taxon>Chromadorea</taxon>
        <taxon>Rhabditida</taxon>
        <taxon>Rhabditina</taxon>
        <taxon>Rhabditomorpha</taxon>
        <taxon>Rhabditoidea</taxon>
        <taxon>Rhabditidae</taxon>
        <taxon>Peloderinae</taxon>
        <taxon>Caenorhabditis</taxon>
    </lineage>
</organism>